<proteinExistence type="inferred from homology"/>
<organism>
    <name type="scientific">Prochlorococcus marinus (strain NATL1A)</name>
    <dbReference type="NCBI Taxonomy" id="167555"/>
    <lineage>
        <taxon>Bacteria</taxon>
        <taxon>Bacillati</taxon>
        <taxon>Cyanobacteriota</taxon>
        <taxon>Cyanophyceae</taxon>
        <taxon>Synechococcales</taxon>
        <taxon>Prochlorococcaceae</taxon>
        <taxon>Prochlorococcus</taxon>
    </lineage>
</organism>
<feature type="chain" id="PRO_1000055435" description="Large ribosomal subunit protein uL13">
    <location>
        <begin position="1"/>
        <end position="150"/>
    </location>
</feature>
<feature type="region of interest" description="Disordered" evidence="2">
    <location>
        <begin position="128"/>
        <end position="150"/>
    </location>
</feature>
<keyword id="KW-0687">Ribonucleoprotein</keyword>
<keyword id="KW-0689">Ribosomal protein</keyword>
<sequence length="150" mass="16816">MNKTSVPSPDSIDRQWFLVDAENQTLGRLATEVASVLRGKTKPNFTPHLDTGDFVIVVNAEKIKVTGKKSDQKLYRRHSGRPGGMKVETFKALQSRIPERIVEKAIKGMLPHTRLGRQLFTKLKVYKGSDHPHSAQEPKILSLNSESVTK</sequence>
<gene>
    <name evidence="1" type="primary">rplM</name>
    <name evidence="1" type="synonym">rpl13</name>
    <name type="ordered locus">NATL1_19781</name>
</gene>
<comment type="function">
    <text evidence="1">This protein is one of the early assembly proteins of the 50S ribosomal subunit, although it is not seen to bind rRNA by itself. It is important during the early stages of 50S assembly.</text>
</comment>
<comment type="subunit">
    <text evidence="1">Part of the 50S ribosomal subunit.</text>
</comment>
<comment type="similarity">
    <text evidence="1">Belongs to the universal ribosomal protein uL13 family.</text>
</comment>
<name>RL13_PROM1</name>
<accession>A2C4X4</accession>
<protein>
    <recommendedName>
        <fullName evidence="1">Large ribosomal subunit protein uL13</fullName>
    </recommendedName>
    <alternativeName>
        <fullName evidence="3">50S ribosomal protein L13</fullName>
    </alternativeName>
</protein>
<evidence type="ECO:0000255" key="1">
    <source>
        <dbReference type="HAMAP-Rule" id="MF_01366"/>
    </source>
</evidence>
<evidence type="ECO:0000256" key="2">
    <source>
        <dbReference type="SAM" id="MobiDB-lite"/>
    </source>
</evidence>
<evidence type="ECO:0000305" key="3"/>
<dbReference type="EMBL" id="CP000553">
    <property type="protein sequence ID" value="ABM76534.1"/>
    <property type="molecule type" value="Genomic_DNA"/>
</dbReference>
<dbReference type="RefSeq" id="WP_011295447.1">
    <property type="nucleotide sequence ID" value="NC_008819.1"/>
</dbReference>
<dbReference type="SMR" id="A2C4X4"/>
<dbReference type="KEGG" id="pme:NATL1_19781"/>
<dbReference type="eggNOG" id="COG0102">
    <property type="taxonomic scope" value="Bacteria"/>
</dbReference>
<dbReference type="HOGENOM" id="CLU_082184_2_2_3"/>
<dbReference type="Proteomes" id="UP000002592">
    <property type="component" value="Chromosome"/>
</dbReference>
<dbReference type="GO" id="GO:0022625">
    <property type="term" value="C:cytosolic large ribosomal subunit"/>
    <property type="evidence" value="ECO:0007669"/>
    <property type="project" value="TreeGrafter"/>
</dbReference>
<dbReference type="GO" id="GO:0003729">
    <property type="term" value="F:mRNA binding"/>
    <property type="evidence" value="ECO:0007669"/>
    <property type="project" value="TreeGrafter"/>
</dbReference>
<dbReference type="GO" id="GO:0003735">
    <property type="term" value="F:structural constituent of ribosome"/>
    <property type="evidence" value="ECO:0007669"/>
    <property type="project" value="InterPro"/>
</dbReference>
<dbReference type="GO" id="GO:0017148">
    <property type="term" value="P:negative regulation of translation"/>
    <property type="evidence" value="ECO:0007669"/>
    <property type="project" value="TreeGrafter"/>
</dbReference>
<dbReference type="GO" id="GO:0006412">
    <property type="term" value="P:translation"/>
    <property type="evidence" value="ECO:0007669"/>
    <property type="project" value="UniProtKB-UniRule"/>
</dbReference>
<dbReference type="CDD" id="cd00392">
    <property type="entry name" value="Ribosomal_L13"/>
    <property type="match status" value="1"/>
</dbReference>
<dbReference type="FunFam" id="3.90.1180.10:FF:000001">
    <property type="entry name" value="50S ribosomal protein L13"/>
    <property type="match status" value="1"/>
</dbReference>
<dbReference type="Gene3D" id="3.90.1180.10">
    <property type="entry name" value="Ribosomal protein L13"/>
    <property type="match status" value="1"/>
</dbReference>
<dbReference type="HAMAP" id="MF_01366">
    <property type="entry name" value="Ribosomal_uL13"/>
    <property type="match status" value="1"/>
</dbReference>
<dbReference type="InterPro" id="IPR005822">
    <property type="entry name" value="Ribosomal_uL13"/>
</dbReference>
<dbReference type="InterPro" id="IPR005823">
    <property type="entry name" value="Ribosomal_uL13_bac-type"/>
</dbReference>
<dbReference type="InterPro" id="IPR023563">
    <property type="entry name" value="Ribosomal_uL13_CS"/>
</dbReference>
<dbReference type="InterPro" id="IPR036899">
    <property type="entry name" value="Ribosomal_uL13_sf"/>
</dbReference>
<dbReference type="NCBIfam" id="TIGR01066">
    <property type="entry name" value="rplM_bact"/>
    <property type="match status" value="1"/>
</dbReference>
<dbReference type="PANTHER" id="PTHR11545:SF2">
    <property type="entry name" value="LARGE RIBOSOMAL SUBUNIT PROTEIN UL13M"/>
    <property type="match status" value="1"/>
</dbReference>
<dbReference type="PANTHER" id="PTHR11545">
    <property type="entry name" value="RIBOSOMAL PROTEIN L13"/>
    <property type="match status" value="1"/>
</dbReference>
<dbReference type="Pfam" id="PF00572">
    <property type="entry name" value="Ribosomal_L13"/>
    <property type="match status" value="1"/>
</dbReference>
<dbReference type="PIRSF" id="PIRSF002181">
    <property type="entry name" value="Ribosomal_L13"/>
    <property type="match status" value="1"/>
</dbReference>
<dbReference type="SUPFAM" id="SSF52161">
    <property type="entry name" value="Ribosomal protein L13"/>
    <property type="match status" value="1"/>
</dbReference>
<dbReference type="PROSITE" id="PS00783">
    <property type="entry name" value="RIBOSOMAL_L13"/>
    <property type="match status" value="1"/>
</dbReference>
<reference key="1">
    <citation type="journal article" date="2007" name="PLoS Genet.">
        <title>Patterns and implications of gene gain and loss in the evolution of Prochlorococcus.</title>
        <authorList>
            <person name="Kettler G.C."/>
            <person name="Martiny A.C."/>
            <person name="Huang K."/>
            <person name="Zucker J."/>
            <person name="Coleman M.L."/>
            <person name="Rodrigue S."/>
            <person name="Chen F."/>
            <person name="Lapidus A."/>
            <person name="Ferriera S."/>
            <person name="Johnson J."/>
            <person name="Steglich C."/>
            <person name="Church G.M."/>
            <person name="Richardson P."/>
            <person name="Chisholm S.W."/>
        </authorList>
    </citation>
    <scope>NUCLEOTIDE SEQUENCE [LARGE SCALE GENOMIC DNA]</scope>
    <source>
        <strain>NATL1A</strain>
    </source>
</reference>